<comment type="function">
    <text evidence="1">Catalyzes the acyloin condensation reaction between C atoms 2 and 3 of pyruvate and glyceraldehyde 3-phosphate to yield 1-deoxy-D-xylulose-5-phosphate (DXP).</text>
</comment>
<comment type="catalytic activity">
    <reaction evidence="1">
        <text>D-glyceraldehyde 3-phosphate + pyruvate + H(+) = 1-deoxy-D-xylulose 5-phosphate + CO2</text>
        <dbReference type="Rhea" id="RHEA:12605"/>
        <dbReference type="ChEBI" id="CHEBI:15361"/>
        <dbReference type="ChEBI" id="CHEBI:15378"/>
        <dbReference type="ChEBI" id="CHEBI:16526"/>
        <dbReference type="ChEBI" id="CHEBI:57792"/>
        <dbReference type="ChEBI" id="CHEBI:59776"/>
        <dbReference type="EC" id="2.2.1.7"/>
    </reaction>
</comment>
<comment type="cofactor">
    <cofactor evidence="1">
        <name>Mg(2+)</name>
        <dbReference type="ChEBI" id="CHEBI:18420"/>
    </cofactor>
    <text evidence="1">Binds 1 Mg(2+) ion per subunit.</text>
</comment>
<comment type="cofactor">
    <cofactor evidence="1">
        <name>thiamine diphosphate</name>
        <dbReference type="ChEBI" id="CHEBI:58937"/>
    </cofactor>
    <text evidence="1">Binds 1 thiamine pyrophosphate per subunit.</text>
</comment>
<comment type="pathway">
    <text evidence="1">Metabolic intermediate biosynthesis; 1-deoxy-D-xylulose 5-phosphate biosynthesis; 1-deoxy-D-xylulose 5-phosphate from D-glyceraldehyde 3-phosphate and pyruvate: step 1/1.</text>
</comment>
<comment type="subunit">
    <text evidence="1">Homodimer.</text>
</comment>
<comment type="similarity">
    <text evidence="1">Belongs to the transketolase family. DXPS subfamily.</text>
</comment>
<feature type="chain" id="PRO_1000079098" description="1-deoxy-D-xylulose-5-phosphate synthase">
    <location>
        <begin position="1"/>
        <end position="631"/>
    </location>
</feature>
<feature type="binding site" evidence="1">
    <location>
        <position position="87"/>
    </location>
    <ligand>
        <name>thiamine diphosphate</name>
        <dbReference type="ChEBI" id="CHEBI:58937"/>
    </ligand>
</feature>
<feature type="binding site" evidence="1">
    <location>
        <begin position="128"/>
        <end position="130"/>
    </location>
    <ligand>
        <name>thiamine diphosphate</name>
        <dbReference type="ChEBI" id="CHEBI:58937"/>
    </ligand>
</feature>
<feature type="binding site" evidence="1">
    <location>
        <position position="159"/>
    </location>
    <ligand>
        <name>Mg(2+)</name>
        <dbReference type="ChEBI" id="CHEBI:18420"/>
    </ligand>
</feature>
<feature type="binding site" evidence="1">
    <location>
        <begin position="160"/>
        <end position="161"/>
    </location>
    <ligand>
        <name>thiamine diphosphate</name>
        <dbReference type="ChEBI" id="CHEBI:58937"/>
    </ligand>
</feature>
<feature type="binding site" evidence="1">
    <location>
        <position position="188"/>
    </location>
    <ligand>
        <name>Mg(2+)</name>
        <dbReference type="ChEBI" id="CHEBI:18420"/>
    </ligand>
</feature>
<feature type="binding site" evidence="1">
    <location>
        <position position="188"/>
    </location>
    <ligand>
        <name>thiamine diphosphate</name>
        <dbReference type="ChEBI" id="CHEBI:58937"/>
    </ligand>
</feature>
<feature type="binding site" evidence="1">
    <location>
        <position position="295"/>
    </location>
    <ligand>
        <name>thiamine diphosphate</name>
        <dbReference type="ChEBI" id="CHEBI:58937"/>
    </ligand>
</feature>
<feature type="binding site" evidence="1">
    <location>
        <position position="377"/>
    </location>
    <ligand>
        <name>thiamine diphosphate</name>
        <dbReference type="ChEBI" id="CHEBI:58937"/>
    </ligand>
</feature>
<reference key="1">
    <citation type="submission" date="2008-01" db="EMBL/GenBank/DDBJ databases">
        <title>Complete sequence of Pseudomonas putida GB-1.</title>
        <authorList>
            <consortium name="US DOE Joint Genome Institute"/>
            <person name="Copeland A."/>
            <person name="Lucas S."/>
            <person name="Lapidus A."/>
            <person name="Barry K."/>
            <person name="Glavina del Rio T."/>
            <person name="Dalin E."/>
            <person name="Tice H."/>
            <person name="Pitluck S."/>
            <person name="Bruce D."/>
            <person name="Goodwin L."/>
            <person name="Chertkov O."/>
            <person name="Brettin T."/>
            <person name="Detter J.C."/>
            <person name="Han C."/>
            <person name="Kuske C.R."/>
            <person name="Schmutz J."/>
            <person name="Larimer F."/>
            <person name="Land M."/>
            <person name="Hauser L."/>
            <person name="Kyrpides N."/>
            <person name="Kim E."/>
            <person name="McCarthy J.K."/>
            <person name="Richardson P."/>
        </authorList>
    </citation>
    <scope>NUCLEOTIDE SEQUENCE [LARGE SCALE GENOMIC DNA]</scope>
    <source>
        <strain>GB-1</strain>
    </source>
</reference>
<protein>
    <recommendedName>
        <fullName evidence="1">1-deoxy-D-xylulose-5-phosphate synthase</fullName>
        <ecNumber evidence="1">2.2.1.7</ecNumber>
    </recommendedName>
    <alternativeName>
        <fullName evidence="1">1-deoxyxylulose-5-phosphate synthase</fullName>
        <shortName evidence="1">DXP synthase</shortName>
        <shortName evidence="1">DXPS</shortName>
    </alternativeName>
</protein>
<accession>B0KL79</accession>
<gene>
    <name evidence="1" type="primary">dxs</name>
    <name type="ordered locus">PputGB1_0572</name>
</gene>
<keyword id="KW-0414">Isoprene biosynthesis</keyword>
<keyword id="KW-0460">Magnesium</keyword>
<keyword id="KW-0479">Metal-binding</keyword>
<keyword id="KW-0784">Thiamine biosynthesis</keyword>
<keyword id="KW-0786">Thiamine pyrophosphate</keyword>
<keyword id="KW-0808">Transferase</keyword>
<evidence type="ECO:0000255" key="1">
    <source>
        <dbReference type="HAMAP-Rule" id="MF_00315"/>
    </source>
</evidence>
<organism>
    <name type="scientific">Pseudomonas putida (strain GB-1)</name>
    <dbReference type="NCBI Taxonomy" id="76869"/>
    <lineage>
        <taxon>Bacteria</taxon>
        <taxon>Pseudomonadati</taxon>
        <taxon>Pseudomonadota</taxon>
        <taxon>Gammaproteobacteria</taxon>
        <taxon>Pseudomonadales</taxon>
        <taxon>Pseudomonadaceae</taxon>
        <taxon>Pseudomonas</taxon>
    </lineage>
</organism>
<dbReference type="EC" id="2.2.1.7" evidence="1"/>
<dbReference type="EMBL" id="CP000926">
    <property type="protein sequence ID" value="ABY96483.1"/>
    <property type="molecule type" value="Genomic_DNA"/>
</dbReference>
<dbReference type="RefSeq" id="WP_012270295.1">
    <property type="nucleotide sequence ID" value="NC_010322.1"/>
</dbReference>
<dbReference type="SMR" id="B0KL79"/>
<dbReference type="KEGG" id="ppg:PputGB1_0572"/>
<dbReference type="eggNOG" id="COG1154">
    <property type="taxonomic scope" value="Bacteria"/>
</dbReference>
<dbReference type="HOGENOM" id="CLU_009227_1_4_6"/>
<dbReference type="UniPathway" id="UPA00064">
    <property type="reaction ID" value="UER00091"/>
</dbReference>
<dbReference type="Proteomes" id="UP000002157">
    <property type="component" value="Chromosome"/>
</dbReference>
<dbReference type="GO" id="GO:0005829">
    <property type="term" value="C:cytosol"/>
    <property type="evidence" value="ECO:0007669"/>
    <property type="project" value="TreeGrafter"/>
</dbReference>
<dbReference type="GO" id="GO:0008661">
    <property type="term" value="F:1-deoxy-D-xylulose-5-phosphate synthase activity"/>
    <property type="evidence" value="ECO:0007669"/>
    <property type="project" value="UniProtKB-UniRule"/>
</dbReference>
<dbReference type="GO" id="GO:0000287">
    <property type="term" value="F:magnesium ion binding"/>
    <property type="evidence" value="ECO:0007669"/>
    <property type="project" value="UniProtKB-UniRule"/>
</dbReference>
<dbReference type="GO" id="GO:0030976">
    <property type="term" value="F:thiamine pyrophosphate binding"/>
    <property type="evidence" value="ECO:0007669"/>
    <property type="project" value="UniProtKB-UniRule"/>
</dbReference>
<dbReference type="GO" id="GO:0052865">
    <property type="term" value="P:1-deoxy-D-xylulose 5-phosphate biosynthetic process"/>
    <property type="evidence" value="ECO:0007669"/>
    <property type="project" value="UniProtKB-UniPathway"/>
</dbReference>
<dbReference type="GO" id="GO:0019288">
    <property type="term" value="P:isopentenyl diphosphate biosynthetic process, methylerythritol 4-phosphate pathway"/>
    <property type="evidence" value="ECO:0007669"/>
    <property type="project" value="TreeGrafter"/>
</dbReference>
<dbReference type="GO" id="GO:0016114">
    <property type="term" value="P:terpenoid biosynthetic process"/>
    <property type="evidence" value="ECO:0007669"/>
    <property type="project" value="UniProtKB-UniRule"/>
</dbReference>
<dbReference type="GO" id="GO:0009228">
    <property type="term" value="P:thiamine biosynthetic process"/>
    <property type="evidence" value="ECO:0007669"/>
    <property type="project" value="UniProtKB-UniRule"/>
</dbReference>
<dbReference type="CDD" id="cd02007">
    <property type="entry name" value="TPP_DXS"/>
    <property type="match status" value="1"/>
</dbReference>
<dbReference type="CDD" id="cd07033">
    <property type="entry name" value="TPP_PYR_DXS_TK_like"/>
    <property type="match status" value="1"/>
</dbReference>
<dbReference type="FunFam" id="3.40.50.920:FF:000002">
    <property type="entry name" value="1-deoxy-D-xylulose-5-phosphate synthase"/>
    <property type="match status" value="1"/>
</dbReference>
<dbReference type="FunFam" id="3.40.50.970:FF:000005">
    <property type="entry name" value="1-deoxy-D-xylulose-5-phosphate synthase"/>
    <property type="match status" value="1"/>
</dbReference>
<dbReference type="Gene3D" id="3.40.50.920">
    <property type="match status" value="1"/>
</dbReference>
<dbReference type="Gene3D" id="3.40.50.970">
    <property type="match status" value="2"/>
</dbReference>
<dbReference type="HAMAP" id="MF_00315">
    <property type="entry name" value="DXP_synth"/>
    <property type="match status" value="1"/>
</dbReference>
<dbReference type="InterPro" id="IPR005477">
    <property type="entry name" value="Dxylulose-5-P_synthase"/>
</dbReference>
<dbReference type="InterPro" id="IPR029061">
    <property type="entry name" value="THDP-binding"/>
</dbReference>
<dbReference type="InterPro" id="IPR009014">
    <property type="entry name" value="Transketo_C/PFOR_II"/>
</dbReference>
<dbReference type="InterPro" id="IPR005475">
    <property type="entry name" value="Transketolase-like_Pyr-bd"/>
</dbReference>
<dbReference type="InterPro" id="IPR020826">
    <property type="entry name" value="Transketolase_BS"/>
</dbReference>
<dbReference type="InterPro" id="IPR033248">
    <property type="entry name" value="Transketolase_C"/>
</dbReference>
<dbReference type="NCBIfam" id="TIGR00204">
    <property type="entry name" value="dxs"/>
    <property type="match status" value="1"/>
</dbReference>
<dbReference type="NCBIfam" id="NF003933">
    <property type="entry name" value="PRK05444.2-2"/>
    <property type="match status" value="1"/>
</dbReference>
<dbReference type="PANTHER" id="PTHR43322">
    <property type="entry name" value="1-D-DEOXYXYLULOSE 5-PHOSPHATE SYNTHASE-RELATED"/>
    <property type="match status" value="1"/>
</dbReference>
<dbReference type="PANTHER" id="PTHR43322:SF5">
    <property type="entry name" value="1-DEOXY-D-XYLULOSE-5-PHOSPHATE SYNTHASE, CHLOROPLASTIC"/>
    <property type="match status" value="1"/>
</dbReference>
<dbReference type="Pfam" id="PF13292">
    <property type="entry name" value="DXP_synthase_N"/>
    <property type="match status" value="1"/>
</dbReference>
<dbReference type="Pfam" id="PF02779">
    <property type="entry name" value="Transket_pyr"/>
    <property type="match status" value="1"/>
</dbReference>
<dbReference type="Pfam" id="PF02780">
    <property type="entry name" value="Transketolase_C"/>
    <property type="match status" value="1"/>
</dbReference>
<dbReference type="SMART" id="SM00861">
    <property type="entry name" value="Transket_pyr"/>
    <property type="match status" value="1"/>
</dbReference>
<dbReference type="SUPFAM" id="SSF52518">
    <property type="entry name" value="Thiamin diphosphate-binding fold (THDP-binding)"/>
    <property type="match status" value="2"/>
</dbReference>
<dbReference type="SUPFAM" id="SSF52922">
    <property type="entry name" value="TK C-terminal domain-like"/>
    <property type="match status" value="1"/>
</dbReference>
<dbReference type="PROSITE" id="PS00802">
    <property type="entry name" value="TRANSKETOLASE_2"/>
    <property type="match status" value="1"/>
</dbReference>
<sequence length="631" mass="68153">MPTTFQEIPRERPVTPLLDRADTPAGLRRLAEADLETLADELRQELLYTVGQTGGHFGAGLGVIELTIALHYVFDTPDDRLVWDVGHQAYPHKILTGRRNRMLSLRQKDGIAAFPRRSESEYDTFGVGHSSTSISAALGMAIAARLQNSARKSIAVIGDGALTAGMAFEALNHAQEVNADMLVILNDNDMSISRNVGGLSNYLAKILSSRTYASMREGSKKVLSRLPGAWEIARRTEEYAKGMLVPGTLFEELGWNYIGPIDGHDLPTMIATLRNMRDLKGPQFLHVVTKKGKGFAPAEVDPIGYHAITKLEPADKPAAPKKVSGPKYSAVFGQWLCDMAAADNRLVGITPAMKEGSDLVDFSERYPQRYFDVAIAEQHAVTLAAGMACEGSKPVVAIYSTFLQRAYDQLIHDVAVQNLDVLFAIDRAGLVGEDGPTHAGSYDLSYLRCIPGMLVMTPSDENELRKMLSTGHLYNGPAAVRYPRGTGPNAPISGDLQPLEIGKGVVRRQGEKIALLVFGVQLAEAMQVAEQINATVVDMRFVKPLDEALVLELAGSHELLVTIEENAIMGGAGAAVGEFLASQAVLKPLLHLGLPDIYVEHAKPAQMLAECGLDAAGIEASVKARMAKLGL</sequence>
<name>DXS_PSEPG</name>
<proteinExistence type="inferred from homology"/>